<reference key="1">
    <citation type="journal article" date="2008" name="Science">
        <title>Genome of an endosymbiont coupling N2 fixation to cellulolysis within RT protist cells in termite gut.</title>
        <authorList>
            <person name="Hongoh Y."/>
            <person name="Sharma V.K."/>
            <person name="Prakash T."/>
            <person name="Noda S."/>
            <person name="Toh H."/>
            <person name="Taylor T.D."/>
            <person name="Kudo T."/>
            <person name="Sakaki Y."/>
            <person name="Toyoda A."/>
            <person name="Hattori M."/>
            <person name="Ohkuma M."/>
        </authorList>
    </citation>
    <scope>NUCLEOTIDE SEQUENCE [LARGE SCALE GENOMIC DNA]</scope>
</reference>
<protein>
    <recommendedName>
        <fullName evidence="1">GTPase Obg</fullName>
        <ecNumber evidence="1">3.6.5.-</ecNumber>
    </recommendedName>
    <alternativeName>
        <fullName evidence="1">GTP-binding protein Obg</fullName>
    </alternativeName>
</protein>
<proteinExistence type="inferred from homology"/>
<keyword id="KW-0963">Cytoplasm</keyword>
<keyword id="KW-0342">GTP-binding</keyword>
<keyword id="KW-0378">Hydrolase</keyword>
<keyword id="KW-0460">Magnesium</keyword>
<keyword id="KW-0479">Metal-binding</keyword>
<keyword id="KW-0547">Nucleotide-binding</keyword>
<keyword id="KW-1185">Reference proteome</keyword>
<gene>
    <name evidence="1" type="primary">obg</name>
    <name type="ordered locus">CFPG_465</name>
</gene>
<evidence type="ECO:0000255" key="1">
    <source>
        <dbReference type="HAMAP-Rule" id="MF_01454"/>
    </source>
</evidence>
<evidence type="ECO:0000255" key="2">
    <source>
        <dbReference type="PROSITE-ProRule" id="PRU01231"/>
    </source>
</evidence>
<feature type="chain" id="PRO_0000385710" description="GTPase Obg">
    <location>
        <begin position="1"/>
        <end position="337"/>
    </location>
</feature>
<feature type="domain" description="Obg" evidence="2">
    <location>
        <begin position="4"/>
        <end position="162"/>
    </location>
</feature>
<feature type="domain" description="OBG-type G" evidence="1">
    <location>
        <begin position="163"/>
        <end position="329"/>
    </location>
</feature>
<feature type="binding site" evidence="1">
    <location>
        <begin position="169"/>
        <end position="176"/>
    </location>
    <ligand>
        <name>GTP</name>
        <dbReference type="ChEBI" id="CHEBI:37565"/>
    </ligand>
</feature>
<feature type="binding site" evidence="1">
    <location>
        <position position="176"/>
    </location>
    <ligand>
        <name>Mg(2+)</name>
        <dbReference type="ChEBI" id="CHEBI:18420"/>
    </ligand>
</feature>
<feature type="binding site" evidence="1">
    <location>
        <begin position="194"/>
        <end position="198"/>
    </location>
    <ligand>
        <name>GTP</name>
        <dbReference type="ChEBI" id="CHEBI:37565"/>
    </ligand>
</feature>
<feature type="binding site" evidence="1">
    <location>
        <position position="196"/>
    </location>
    <ligand>
        <name>Mg(2+)</name>
        <dbReference type="ChEBI" id="CHEBI:18420"/>
    </ligand>
</feature>
<feature type="binding site" evidence="1">
    <location>
        <begin position="216"/>
        <end position="219"/>
    </location>
    <ligand>
        <name>GTP</name>
        <dbReference type="ChEBI" id="CHEBI:37565"/>
    </ligand>
</feature>
<feature type="binding site" evidence="1">
    <location>
        <begin position="283"/>
        <end position="286"/>
    </location>
    <ligand>
        <name>GTP</name>
        <dbReference type="ChEBI" id="CHEBI:37565"/>
    </ligand>
</feature>
<feature type="binding site" evidence="1">
    <location>
        <begin position="310"/>
        <end position="312"/>
    </location>
    <ligand>
        <name>GTP</name>
        <dbReference type="ChEBI" id="CHEBI:37565"/>
    </ligand>
</feature>
<accession>B6YRA6</accession>
<name>OBG_AZOPC</name>
<sequence>MTKSNFVDYAKIHIRSGKGGKGSIHFRHEKYIPWGGSDGGNGGKGGDIILRGSRNYWTLLHLKHKYHIFADHGKAGEGKLRHGKDGQNKTIELPIGTAVFDGTTGKFITDIKYDKQEIVLLKGGRGGRGNNYFKSAVNQTPKHSQPGEPYEERQIVFQLKLLADVGLVGFPNTGKSTLLSIVSAAKPKIADYAFTTLEPNLGVVNVHNSYTFVMADIPGIVEGANEGKGLGLRFLRHIERNSLLLFMIPSDANDIANEYKILLNELACYNSELLNKQRILAISKSDMLDTKLEDVIKKELPTDIPHIFISSFTQKGITVLKDLLWEKLRFHDMKEIS</sequence>
<organism>
    <name type="scientific">Azobacteroides pseudotrichonymphae genomovar. CFP2</name>
    <dbReference type="NCBI Taxonomy" id="511995"/>
    <lineage>
        <taxon>Bacteria</taxon>
        <taxon>Pseudomonadati</taxon>
        <taxon>Bacteroidota</taxon>
        <taxon>Bacteroidia</taxon>
        <taxon>Bacteroidales</taxon>
        <taxon>Candidatus Azobacteroides</taxon>
    </lineage>
</organism>
<dbReference type="EC" id="3.6.5.-" evidence="1"/>
<dbReference type="EMBL" id="AP010656">
    <property type="protein sequence ID" value="BAG83728.1"/>
    <property type="molecule type" value="Genomic_DNA"/>
</dbReference>
<dbReference type="RefSeq" id="WP_012573489.1">
    <property type="nucleotide sequence ID" value="NC_011565.1"/>
</dbReference>
<dbReference type="SMR" id="B6YRA6"/>
<dbReference type="STRING" id="511995.CFPG_465"/>
<dbReference type="KEGG" id="aps:CFPG_465"/>
<dbReference type="eggNOG" id="COG0536">
    <property type="taxonomic scope" value="Bacteria"/>
</dbReference>
<dbReference type="HOGENOM" id="CLU_011747_2_0_10"/>
<dbReference type="OrthoDB" id="9807318at2"/>
<dbReference type="Proteomes" id="UP000000723">
    <property type="component" value="Chromosome"/>
</dbReference>
<dbReference type="GO" id="GO:0005737">
    <property type="term" value="C:cytoplasm"/>
    <property type="evidence" value="ECO:0007669"/>
    <property type="project" value="UniProtKB-SubCell"/>
</dbReference>
<dbReference type="GO" id="GO:0005525">
    <property type="term" value="F:GTP binding"/>
    <property type="evidence" value="ECO:0007669"/>
    <property type="project" value="UniProtKB-UniRule"/>
</dbReference>
<dbReference type="GO" id="GO:0003924">
    <property type="term" value="F:GTPase activity"/>
    <property type="evidence" value="ECO:0007669"/>
    <property type="project" value="UniProtKB-UniRule"/>
</dbReference>
<dbReference type="GO" id="GO:0000287">
    <property type="term" value="F:magnesium ion binding"/>
    <property type="evidence" value="ECO:0007669"/>
    <property type="project" value="InterPro"/>
</dbReference>
<dbReference type="GO" id="GO:0042254">
    <property type="term" value="P:ribosome biogenesis"/>
    <property type="evidence" value="ECO:0007669"/>
    <property type="project" value="UniProtKB-UniRule"/>
</dbReference>
<dbReference type="CDD" id="cd01898">
    <property type="entry name" value="Obg"/>
    <property type="match status" value="1"/>
</dbReference>
<dbReference type="FunFam" id="2.70.210.12:FF:000001">
    <property type="entry name" value="GTPase Obg"/>
    <property type="match status" value="1"/>
</dbReference>
<dbReference type="Gene3D" id="2.70.210.12">
    <property type="entry name" value="GTP1/OBG domain"/>
    <property type="match status" value="1"/>
</dbReference>
<dbReference type="Gene3D" id="3.40.50.300">
    <property type="entry name" value="P-loop containing nucleotide triphosphate hydrolases"/>
    <property type="match status" value="1"/>
</dbReference>
<dbReference type="HAMAP" id="MF_01454">
    <property type="entry name" value="GTPase_Obg"/>
    <property type="match status" value="1"/>
</dbReference>
<dbReference type="InterPro" id="IPR031167">
    <property type="entry name" value="G_OBG"/>
</dbReference>
<dbReference type="InterPro" id="IPR006073">
    <property type="entry name" value="GTP-bd"/>
</dbReference>
<dbReference type="InterPro" id="IPR014100">
    <property type="entry name" value="GTP-bd_Obg/CgtA"/>
</dbReference>
<dbReference type="InterPro" id="IPR006074">
    <property type="entry name" value="GTP1-OBG_CS"/>
</dbReference>
<dbReference type="InterPro" id="IPR006169">
    <property type="entry name" value="GTP1_OBG_dom"/>
</dbReference>
<dbReference type="InterPro" id="IPR036726">
    <property type="entry name" value="GTP1_OBG_dom_sf"/>
</dbReference>
<dbReference type="InterPro" id="IPR045086">
    <property type="entry name" value="OBG_GTPase"/>
</dbReference>
<dbReference type="InterPro" id="IPR027417">
    <property type="entry name" value="P-loop_NTPase"/>
</dbReference>
<dbReference type="NCBIfam" id="TIGR02729">
    <property type="entry name" value="Obg_CgtA"/>
    <property type="match status" value="1"/>
</dbReference>
<dbReference type="NCBIfam" id="NF008955">
    <property type="entry name" value="PRK12297.1"/>
    <property type="match status" value="1"/>
</dbReference>
<dbReference type="NCBIfam" id="NF008956">
    <property type="entry name" value="PRK12299.1"/>
    <property type="match status" value="1"/>
</dbReference>
<dbReference type="PANTHER" id="PTHR11702">
    <property type="entry name" value="DEVELOPMENTALLY REGULATED GTP-BINDING PROTEIN-RELATED"/>
    <property type="match status" value="1"/>
</dbReference>
<dbReference type="PANTHER" id="PTHR11702:SF31">
    <property type="entry name" value="MITOCHONDRIAL RIBOSOME-ASSOCIATED GTPASE 2"/>
    <property type="match status" value="1"/>
</dbReference>
<dbReference type="Pfam" id="PF01018">
    <property type="entry name" value="GTP1_OBG"/>
    <property type="match status" value="1"/>
</dbReference>
<dbReference type="Pfam" id="PF01926">
    <property type="entry name" value="MMR_HSR1"/>
    <property type="match status" value="1"/>
</dbReference>
<dbReference type="PIRSF" id="PIRSF002401">
    <property type="entry name" value="GTP_bd_Obg/CgtA"/>
    <property type="match status" value="1"/>
</dbReference>
<dbReference type="PRINTS" id="PR00326">
    <property type="entry name" value="GTP1OBG"/>
</dbReference>
<dbReference type="SUPFAM" id="SSF82051">
    <property type="entry name" value="Obg GTP-binding protein N-terminal domain"/>
    <property type="match status" value="1"/>
</dbReference>
<dbReference type="SUPFAM" id="SSF52540">
    <property type="entry name" value="P-loop containing nucleoside triphosphate hydrolases"/>
    <property type="match status" value="1"/>
</dbReference>
<dbReference type="PROSITE" id="PS51710">
    <property type="entry name" value="G_OBG"/>
    <property type="match status" value="1"/>
</dbReference>
<dbReference type="PROSITE" id="PS00905">
    <property type="entry name" value="GTP1_OBG"/>
    <property type="match status" value="1"/>
</dbReference>
<dbReference type="PROSITE" id="PS51883">
    <property type="entry name" value="OBG"/>
    <property type="match status" value="1"/>
</dbReference>
<comment type="function">
    <text evidence="1">An essential GTPase which binds GTP, GDP and possibly (p)ppGpp with moderate affinity, with high nucleotide exchange rates and a fairly low GTP hydrolysis rate. Plays a role in control of the cell cycle, stress response, ribosome biogenesis and in those bacteria that undergo differentiation, in morphogenesis control.</text>
</comment>
<comment type="cofactor">
    <cofactor evidence="1">
        <name>Mg(2+)</name>
        <dbReference type="ChEBI" id="CHEBI:18420"/>
    </cofactor>
</comment>
<comment type="subunit">
    <text evidence="1">Monomer.</text>
</comment>
<comment type="subcellular location">
    <subcellularLocation>
        <location evidence="1">Cytoplasm</location>
    </subcellularLocation>
</comment>
<comment type="similarity">
    <text evidence="1">Belongs to the TRAFAC class OBG-HflX-like GTPase superfamily. OBG GTPase family.</text>
</comment>